<proteinExistence type="evidence at protein level"/>
<name>TUBE_BPP2</name>
<comment type="function">
    <text evidence="1">Forms the virus tail tube.</text>
</comment>
<comment type="subcellular location">
    <subcellularLocation>
        <location evidence="2">Virion</location>
    </subcellularLocation>
</comment>
<comment type="similarity">
    <text evidence="2">Belongs to the P2likevirus major tail tube protein family.</text>
</comment>
<evidence type="ECO:0000269" key="1">
    <source>
    </source>
</evidence>
<evidence type="ECO:0000305" key="2"/>
<keyword id="KW-0903">Direct protein sequencing</keyword>
<keyword id="KW-0426">Late protein</keyword>
<keyword id="KW-1185">Reference proteome</keyword>
<keyword id="KW-1242">Viral contractile tail ejection system</keyword>
<keyword id="KW-1171">Viral genome ejection through host cell envelope</keyword>
<keyword id="KW-1162">Viral penetration into host cytoplasm</keyword>
<keyword id="KW-1227">Viral tail protein</keyword>
<keyword id="KW-1228">Viral tail tube protein</keyword>
<keyword id="KW-0946">Virion</keyword>
<keyword id="KW-1160">Virus entry into host cell</keyword>
<accession>P22502</accession>
<feature type="initiator methionine" description="Removed; by host" evidence="1">
    <location>
        <position position="1"/>
    </location>
</feature>
<feature type="chain" id="PRO_0000165251" description="Tail tube protein">
    <location>
        <begin position="2"/>
        <end position="172"/>
    </location>
</feature>
<organism>
    <name type="scientific">Escherichia phage P2</name>
    <name type="common">Bacteriophage P2</name>
    <dbReference type="NCBI Taxonomy" id="2905681"/>
    <lineage>
        <taxon>Viruses</taxon>
        <taxon>Duplodnaviria</taxon>
        <taxon>Heunggongvirae</taxon>
        <taxon>Uroviricota</taxon>
        <taxon>Caudoviricetes</taxon>
        <taxon>Peduoviridae</taxon>
        <taxon>Peduovirus</taxon>
        <taxon>Peduovirus P2</taxon>
    </lineage>
</organism>
<sequence length="172" mass="19069">MAMPRKLKLMNVFLNGYSYQGVAKSVTLPKLTRKLENYRGAGMNGSAPVDLGLDDDALSMEWSLGGFPDSVIWELYAATGVDAVPIRFAGSYQRDDTGETVAVEVVMRGRQKEIDTGEGKQGEDTESKISVVCTYFRLTMDGKELVEIDTINMIEKVNGVDRLEQHRRNIGL</sequence>
<organismHost>
    <name type="scientific">Enterobacteriaceae</name>
    <dbReference type="NCBI Taxonomy" id="543"/>
</organismHost>
<gene>
    <name type="primary">FII</name>
</gene>
<reference key="1">
    <citation type="journal article" date="1991" name="Virology">
        <title>Nucleotide sequence of the genes encoding the major tail sheath and tail tube proteins of bacteriophage P2.</title>
        <authorList>
            <person name="Temple L.M."/>
            <person name="Forsburg S.L."/>
            <person name="Calendar R."/>
            <person name="Christie G.E."/>
        </authorList>
    </citation>
    <scope>NUCLEOTIDE SEQUENCE [GENOMIC DNA]</scope>
    <scope>PROTEIN SEQUENCE OF 2-20</scope>
    <scope>FUNCTION</scope>
</reference>
<dbReference type="EMBL" id="AF063097">
    <property type="protein sequence ID" value="AAD03290.1"/>
    <property type="molecule type" value="Genomic_DNA"/>
</dbReference>
<dbReference type="PIR" id="S26392">
    <property type="entry name" value="S26392"/>
</dbReference>
<dbReference type="RefSeq" id="NP_046779.1">
    <property type="nucleotide sequence ID" value="NC_001895.1"/>
</dbReference>
<dbReference type="SMR" id="P22502"/>
<dbReference type="GeneID" id="77440814"/>
<dbReference type="KEGG" id="vg:77440814"/>
<dbReference type="Proteomes" id="UP000009092">
    <property type="component" value="Genome"/>
</dbReference>
<dbReference type="GO" id="GO:0098026">
    <property type="term" value="C:virus tail, tube"/>
    <property type="evidence" value="ECO:0007669"/>
    <property type="project" value="UniProtKB-KW"/>
</dbReference>
<dbReference type="GO" id="GO:0099000">
    <property type="term" value="P:symbiont genome ejection through host cell envelope, contractile tail mechanism"/>
    <property type="evidence" value="ECO:0007669"/>
    <property type="project" value="UniProtKB-KW"/>
</dbReference>
<dbReference type="InterPro" id="IPR006498">
    <property type="entry name" value="Tail_tube"/>
</dbReference>
<dbReference type="NCBIfam" id="TIGR01611">
    <property type="entry name" value="tail_tube"/>
    <property type="match status" value="1"/>
</dbReference>
<dbReference type="Pfam" id="PF04985">
    <property type="entry name" value="Phage_tube"/>
    <property type="match status" value="1"/>
</dbReference>
<protein>
    <recommendedName>
        <fullName>Tail tube protein</fullName>
        <shortName>TTP</shortName>
    </recommendedName>
    <alternativeName>
        <fullName>Protein FII</fullName>
    </alternativeName>
</protein>